<organism>
    <name type="scientific">Schizosaccharomyces pombe (strain 972 / ATCC 24843)</name>
    <name type="common">Fission yeast</name>
    <dbReference type="NCBI Taxonomy" id="284812"/>
    <lineage>
        <taxon>Eukaryota</taxon>
        <taxon>Fungi</taxon>
        <taxon>Dikarya</taxon>
        <taxon>Ascomycota</taxon>
        <taxon>Taphrinomycotina</taxon>
        <taxon>Schizosaccharomycetes</taxon>
        <taxon>Schizosaccharomycetales</taxon>
        <taxon>Schizosaccharomycetaceae</taxon>
        <taxon>Schizosaccharomyces</taxon>
    </lineage>
</organism>
<comment type="function">
    <text evidence="1">Has a role in meiosis.</text>
</comment>
<comment type="subcellular location">
    <subcellularLocation>
        <location evidence="2">Cytoplasm</location>
    </subcellularLocation>
    <subcellularLocation>
        <location evidence="2">Nucleus</location>
    </subcellularLocation>
</comment>
<sequence>MAKVTGLPEFEDLHTKRKWMLNHMAAAFRMFGRNGYNEGTAGHVTVRDPIDENTFWINPLEVPFSLMKPSDLVHINSDGEIIGGSKMKYNTSGFAIHYEMHKVRPEVICVCHVHSIYGKAFSALGKPLDMLNTDCCVFYNNHGIYFDMDDVISMPEEGRRTAKGLADYKAVLVQNHGIMTVGTTVDEAAYLLSLMERSCQIQLLIDSATKVGERKHVHPTRAKAIRENADNPVGLYTAQQPNFLYEVACSNGELEII</sequence>
<accession>Q9P5M9</accession>
<name>MUG14_SCHPO</name>
<reference key="1">
    <citation type="journal article" date="2002" name="Nature">
        <title>The genome sequence of Schizosaccharomyces pombe.</title>
        <authorList>
            <person name="Wood V."/>
            <person name="Gwilliam R."/>
            <person name="Rajandream M.A."/>
            <person name="Lyne M.H."/>
            <person name="Lyne R."/>
            <person name="Stewart A."/>
            <person name="Sgouros J.G."/>
            <person name="Peat N."/>
            <person name="Hayles J."/>
            <person name="Baker S.G."/>
            <person name="Basham D."/>
            <person name="Bowman S."/>
            <person name="Brooks K."/>
            <person name="Brown D."/>
            <person name="Brown S."/>
            <person name="Chillingworth T."/>
            <person name="Churcher C.M."/>
            <person name="Collins M."/>
            <person name="Connor R."/>
            <person name="Cronin A."/>
            <person name="Davis P."/>
            <person name="Feltwell T."/>
            <person name="Fraser A."/>
            <person name="Gentles S."/>
            <person name="Goble A."/>
            <person name="Hamlin N."/>
            <person name="Harris D.E."/>
            <person name="Hidalgo J."/>
            <person name="Hodgson G."/>
            <person name="Holroyd S."/>
            <person name="Hornsby T."/>
            <person name="Howarth S."/>
            <person name="Huckle E.J."/>
            <person name="Hunt S."/>
            <person name="Jagels K."/>
            <person name="James K.D."/>
            <person name="Jones L."/>
            <person name="Jones M."/>
            <person name="Leather S."/>
            <person name="McDonald S."/>
            <person name="McLean J."/>
            <person name="Mooney P."/>
            <person name="Moule S."/>
            <person name="Mungall K.L."/>
            <person name="Murphy L.D."/>
            <person name="Niblett D."/>
            <person name="Odell C."/>
            <person name="Oliver K."/>
            <person name="O'Neil S."/>
            <person name="Pearson D."/>
            <person name="Quail M.A."/>
            <person name="Rabbinowitsch E."/>
            <person name="Rutherford K.M."/>
            <person name="Rutter S."/>
            <person name="Saunders D."/>
            <person name="Seeger K."/>
            <person name="Sharp S."/>
            <person name="Skelton J."/>
            <person name="Simmonds M.N."/>
            <person name="Squares R."/>
            <person name="Squares S."/>
            <person name="Stevens K."/>
            <person name="Taylor K."/>
            <person name="Taylor R.G."/>
            <person name="Tivey A."/>
            <person name="Walsh S.V."/>
            <person name="Warren T."/>
            <person name="Whitehead S."/>
            <person name="Woodward J.R."/>
            <person name="Volckaert G."/>
            <person name="Aert R."/>
            <person name="Robben J."/>
            <person name="Grymonprez B."/>
            <person name="Weltjens I."/>
            <person name="Vanstreels E."/>
            <person name="Rieger M."/>
            <person name="Schaefer M."/>
            <person name="Mueller-Auer S."/>
            <person name="Gabel C."/>
            <person name="Fuchs M."/>
            <person name="Duesterhoeft A."/>
            <person name="Fritzc C."/>
            <person name="Holzer E."/>
            <person name="Moestl D."/>
            <person name="Hilbert H."/>
            <person name="Borzym K."/>
            <person name="Langer I."/>
            <person name="Beck A."/>
            <person name="Lehrach H."/>
            <person name="Reinhardt R."/>
            <person name="Pohl T.M."/>
            <person name="Eger P."/>
            <person name="Zimmermann W."/>
            <person name="Wedler H."/>
            <person name="Wambutt R."/>
            <person name="Purnelle B."/>
            <person name="Goffeau A."/>
            <person name="Cadieu E."/>
            <person name="Dreano S."/>
            <person name="Gloux S."/>
            <person name="Lelaure V."/>
            <person name="Mottier S."/>
            <person name="Galibert F."/>
            <person name="Aves S.J."/>
            <person name="Xiang Z."/>
            <person name="Hunt C."/>
            <person name="Moore K."/>
            <person name="Hurst S.M."/>
            <person name="Lucas M."/>
            <person name="Rochet M."/>
            <person name="Gaillardin C."/>
            <person name="Tallada V.A."/>
            <person name="Garzon A."/>
            <person name="Thode G."/>
            <person name="Daga R.R."/>
            <person name="Cruzado L."/>
            <person name="Jimenez J."/>
            <person name="Sanchez M."/>
            <person name="del Rey F."/>
            <person name="Benito J."/>
            <person name="Dominguez A."/>
            <person name="Revuelta J.L."/>
            <person name="Moreno S."/>
            <person name="Armstrong J."/>
            <person name="Forsburg S.L."/>
            <person name="Cerutti L."/>
            <person name="Lowe T."/>
            <person name="McCombie W.R."/>
            <person name="Paulsen I."/>
            <person name="Potashkin J."/>
            <person name="Shpakovski G.V."/>
            <person name="Ussery D."/>
            <person name="Barrell B.G."/>
            <person name="Nurse P."/>
        </authorList>
    </citation>
    <scope>NUCLEOTIDE SEQUENCE [LARGE SCALE GENOMIC DNA]</scope>
    <source>
        <strain>972 / ATCC 24843</strain>
    </source>
</reference>
<reference key="2">
    <citation type="journal article" date="2005" name="Curr. Biol.">
        <title>A large-scale screen in S. pombe identifies seven novel genes required for critical meiotic events.</title>
        <authorList>
            <person name="Martin-Castellanos C."/>
            <person name="Blanco M."/>
            <person name="Rozalen A.E."/>
            <person name="Perez-Hidalgo L."/>
            <person name="Garcia A.I."/>
            <person name="Conde F."/>
            <person name="Mata J."/>
            <person name="Ellermeier C."/>
            <person name="Davis L."/>
            <person name="San-Segundo P."/>
            <person name="Smith G.R."/>
            <person name="Moreno S."/>
        </authorList>
    </citation>
    <scope>FUNCTION IN MEIOSIS</scope>
</reference>
<reference key="3">
    <citation type="journal article" date="2006" name="Nat. Biotechnol.">
        <title>ORFeome cloning and global analysis of protein localization in the fission yeast Schizosaccharomyces pombe.</title>
        <authorList>
            <person name="Matsuyama A."/>
            <person name="Arai R."/>
            <person name="Yashiroda Y."/>
            <person name="Shirai A."/>
            <person name="Kamata A."/>
            <person name="Sekido S."/>
            <person name="Kobayashi Y."/>
            <person name="Hashimoto A."/>
            <person name="Hamamoto M."/>
            <person name="Hiraoka Y."/>
            <person name="Horinouchi S."/>
            <person name="Yoshida M."/>
        </authorList>
    </citation>
    <scope>SUBCELLULAR LOCATION [LARGE SCALE ANALYSIS]</scope>
</reference>
<protein>
    <recommendedName>
        <fullName>Meiotically up-regulated gene 14 protein</fullName>
    </recommendedName>
</protein>
<proteinExistence type="evidence at protein level"/>
<keyword id="KW-0963">Cytoplasm</keyword>
<keyword id="KW-0469">Meiosis</keyword>
<keyword id="KW-0539">Nucleus</keyword>
<keyword id="KW-1185">Reference proteome</keyword>
<dbReference type="EMBL" id="CU329671">
    <property type="protein sequence ID" value="CAB91575.1"/>
    <property type="molecule type" value="Genomic_DNA"/>
</dbReference>
<dbReference type="RefSeq" id="NP_595056.1">
    <property type="nucleotide sequence ID" value="NM_001020962.2"/>
</dbReference>
<dbReference type="SMR" id="Q9P5M9"/>
<dbReference type="BioGRID" id="277442">
    <property type="interactions" value="13"/>
</dbReference>
<dbReference type="FunCoup" id="Q9P5M9">
    <property type="interactions" value="4"/>
</dbReference>
<dbReference type="STRING" id="284812.Q9P5M9"/>
<dbReference type="iPTMnet" id="Q9P5M9"/>
<dbReference type="PaxDb" id="4896-SPBC359.06.1"/>
<dbReference type="EnsemblFungi" id="SPBC359.06.1">
    <property type="protein sequence ID" value="SPBC359.06.1:pep"/>
    <property type="gene ID" value="SPBC359.06"/>
</dbReference>
<dbReference type="GeneID" id="2540926"/>
<dbReference type="KEGG" id="spo:2540926"/>
<dbReference type="PomBase" id="SPBC359.06">
    <property type="gene designation" value="mug14"/>
</dbReference>
<dbReference type="VEuPathDB" id="FungiDB:SPBC359.06"/>
<dbReference type="eggNOG" id="KOG3699">
    <property type="taxonomic scope" value="Eukaryota"/>
</dbReference>
<dbReference type="HOGENOM" id="CLU_006033_1_2_1"/>
<dbReference type="InParanoid" id="Q9P5M9"/>
<dbReference type="OMA" id="YYDEQLA"/>
<dbReference type="PhylomeDB" id="Q9P5M9"/>
<dbReference type="PRO" id="PR:Q9P5M9"/>
<dbReference type="Proteomes" id="UP000002485">
    <property type="component" value="Chromosome II"/>
</dbReference>
<dbReference type="GO" id="GO:0005737">
    <property type="term" value="C:cytoplasm"/>
    <property type="evidence" value="ECO:0000314"/>
    <property type="project" value="PomBase"/>
</dbReference>
<dbReference type="GO" id="GO:0005856">
    <property type="term" value="C:cytoskeleton"/>
    <property type="evidence" value="ECO:0000318"/>
    <property type="project" value="GO_Central"/>
</dbReference>
<dbReference type="GO" id="GO:0005829">
    <property type="term" value="C:cytosol"/>
    <property type="evidence" value="ECO:0007005"/>
    <property type="project" value="PomBase"/>
</dbReference>
<dbReference type="GO" id="GO:0005634">
    <property type="term" value="C:nucleus"/>
    <property type="evidence" value="ECO:0000314"/>
    <property type="project" value="PomBase"/>
</dbReference>
<dbReference type="GO" id="GO:0051015">
    <property type="term" value="F:actin filament binding"/>
    <property type="evidence" value="ECO:0000318"/>
    <property type="project" value="GO_Central"/>
</dbReference>
<dbReference type="GO" id="GO:0030036">
    <property type="term" value="P:actin cytoskeleton organization"/>
    <property type="evidence" value="ECO:0000266"/>
    <property type="project" value="PomBase"/>
</dbReference>
<dbReference type="GO" id="GO:0051321">
    <property type="term" value="P:meiotic cell cycle"/>
    <property type="evidence" value="ECO:0007669"/>
    <property type="project" value="UniProtKB-KW"/>
</dbReference>
<dbReference type="FunFam" id="3.40.225.10:FF:000009">
    <property type="entry name" value="Class II aldolase/adducin N-terminal"/>
    <property type="match status" value="1"/>
</dbReference>
<dbReference type="Gene3D" id="3.40.225.10">
    <property type="entry name" value="Class II aldolase/adducin N-terminal domain"/>
    <property type="match status" value="1"/>
</dbReference>
<dbReference type="InterPro" id="IPR051017">
    <property type="entry name" value="Aldolase-II_Adducin_sf"/>
</dbReference>
<dbReference type="InterPro" id="IPR001303">
    <property type="entry name" value="Aldolase_II/adducin_N"/>
</dbReference>
<dbReference type="InterPro" id="IPR036409">
    <property type="entry name" value="Aldolase_II/adducin_N_sf"/>
</dbReference>
<dbReference type="NCBIfam" id="NF004855">
    <property type="entry name" value="PRK06208.1"/>
    <property type="match status" value="1"/>
</dbReference>
<dbReference type="PANTHER" id="PTHR10672">
    <property type="entry name" value="ADDUCIN"/>
    <property type="match status" value="1"/>
</dbReference>
<dbReference type="PANTHER" id="PTHR10672:SF25">
    <property type="entry name" value="MEIOTICALLY UP-REGULATED GENE 14 PROTEIN"/>
    <property type="match status" value="1"/>
</dbReference>
<dbReference type="Pfam" id="PF00596">
    <property type="entry name" value="Aldolase_II"/>
    <property type="match status" value="1"/>
</dbReference>
<dbReference type="SMART" id="SM01007">
    <property type="entry name" value="Aldolase_II"/>
    <property type="match status" value="1"/>
</dbReference>
<dbReference type="SUPFAM" id="SSF53639">
    <property type="entry name" value="AraD/HMP-PK domain-like"/>
    <property type="match status" value="1"/>
</dbReference>
<gene>
    <name type="primary">mug14</name>
    <name type="ORF">SPBC359.06</name>
</gene>
<evidence type="ECO:0000269" key="1">
    <source>
    </source>
</evidence>
<evidence type="ECO:0000269" key="2">
    <source>
    </source>
</evidence>
<feature type="chain" id="PRO_0000278493" description="Meiotically up-regulated gene 14 protein">
    <location>
        <begin position="1"/>
        <end position="257"/>
    </location>
</feature>